<reference key="1">
    <citation type="journal article" date="2006" name="Genome Res.">
        <title>Skewed genomic variability in strains of the toxigenic bacterial pathogen, Clostridium perfringens.</title>
        <authorList>
            <person name="Myers G.S.A."/>
            <person name="Rasko D.A."/>
            <person name="Cheung J.K."/>
            <person name="Ravel J."/>
            <person name="Seshadri R."/>
            <person name="DeBoy R.T."/>
            <person name="Ren Q."/>
            <person name="Varga J."/>
            <person name="Awad M.M."/>
            <person name="Brinkac L.M."/>
            <person name="Daugherty S.C."/>
            <person name="Haft D.H."/>
            <person name="Dodson R.J."/>
            <person name="Madupu R."/>
            <person name="Nelson W.C."/>
            <person name="Rosovitz M.J."/>
            <person name="Sullivan S.A."/>
            <person name="Khouri H."/>
            <person name="Dimitrov G.I."/>
            <person name="Watkins K.L."/>
            <person name="Mulligan S."/>
            <person name="Benton J."/>
            <person name="Radune D."/>
            <person name="Fisher D.J."/>
            <person name="Atkins H.S."/>
            <person name="Hiscox T."/>
            <person name="Jost B.H."/>
            <person name="Billington S.J."/>
            <person name="Songer J.G."/>
            <person name="McClane B.A."/>
            <person name="Titball R.W."/>
            <person name="Rood J.I."/>
            <person name="Melville S.B."/>
            <person name="Paulsen I.T."/>
        </authorList>
    </citation>
    <scope>NUCLEOTIDE SEQUENCE [LARGE SCALE GENOMIC DNA]</scope>
    <source>
        <strain>ATCC 13124 / DSM 756 / JCM 1290 / NCIMB 6125 / NCTC 8237 / S 107 / Type A</strain>
    </source>
</reference>
<organism>
    <name type="scientific">Clostridium perfringens (strain ATCC 13124 / DSM 756 / JCM 1290 / NCIMB 6125 / NCTC 8237 / Type A)</name>
    <dbReference type="NCBI Taxonomy" id="195103"/>
    <lineage>
        <taxon>Bacteria</taxon>
        <taxon>Bacillati</taxon>
        <taxon>Bacillota</taxon>
        <taxon>Clostridia</taxon>
        <taxon>Eubacteriales</taxon>
        <taxon>Clostridiaceae</taxon>
        <taxon>Clostridium</taxon>
    </lineage>
</organism>
<evidence type="ECO:0000255" key="1">
    <source>
        <dbReference type="HAMAP-Rule" id="MF_01588"/>
    </source>
</evidence>
<feature type="chain" id="PRO_0000313200" description="DNA ligase">
    <location>
        <begin position="1"/>
        <end position="662"/>
    </location>
</feature>
<feature type="domain" description="BRCT" evidence="1">
    <location>
        <begin position="586"/>
        <end position="662"/>
    </location>
</feature>
<feature type="active site" description="N6-AMP-lysine intermediate" evidence="1">
    <location>
        <position position="121"/>
    </location>
</feature>
<feature type="binding site" evidence="1">
    <location>
        <begin position="31"/>
        <end position="35"/>
    </location>
    <ligand>
        <name>NAD(+)</name>
        <dbReference type="ChEBI" id="CHEBI:57540"/>
    </ligand>
</feature>
<feature type="binding site" evidence="1">
    <location>
        <begin position="79"/>
        <end position="80"/>
    </location>
    <ligand>
        <name>NAD(+)</name>
        <dbReference type="ChEBI" id="CHEBI:57540"/>
    </ligand>
</feature>
<feature type="binding site" evidence="1">
    <location>
        <position position="143"/>
    </location>
    <ligand>
        <name>NAD(+)</name>
        <dbReference type="ChEBI" id="CHEBI:57540"/>
    </ligand>
</feature>
<feature type="binding site" evidence="1">
    <location>
        <position position="177"/>
    </location>
    <ligand>
        <name>NAD(+)</name>
        <dbReference type="ChEBI" id="CHEBI:57540"/>
    </ligand>
</feature>
<feature type="binding site" evidence="1">
    <location>
        <position position="313"/>
    </location>
    <ligand>
        <name>NAD(+)</name>
        <dbReference type="ChEBI" id="CHEBI:57540"/>
    </ligand>
</feature>
<feature type="binding site" evidence="1">
    <location>
        <position position="406"/>
    </location>
    <ligand>
        <name>Zn(2+)</name>
        <dbReference type="ChEBI" id="CHEBI:29105"/>
    </ligand>
</feature>
<feature type="binding site" evidence="1">
    <location>
        <position position="409"/>
    </location>
    <ligand>
        <name>Zn(2+)</name>
        <dbReference type="ChEBI" id="CHEBI:29105"/>
    </ligand>
</feature>
<feature type="binding site" evidence="1">
    <location>
        <position position="422"/>
    </location>
    <ligand>
        <name>Zn(2+)</name>
        <dbReference type="ChEBI" id="CHEBI:29105"/>
    </ligand>
</feature>
<feature type="binding site" evidence="1">
    <location>
        <position position="428"/>
    </location>
    <ligand>
        <name>Zn(2+)</name>
        <dbReference type="ChEBI" id="CHEBI:29105"/>
    </ligand>
</feature>
<proteinExistence type="inferred from homology"/>
<comment type="function">
    <text evidence="1">DNA ligase that catalyzes the formation of phosphodiester linkages between 5'-phosphoryl and 3'-hydroxyl groups in double-stranded DNA using NAD as a coenzyme and as the energy source for the reaction. It is essential for DNA replication and repair of damaged DNA.</text>
</comment>
<comment type="catalytic activity">
    <reaction evidence="1">
        <text>NAD(+) + (deoxyribonucleotide)n-3'-hydroxyl + 5'-phospho-(deoxyribonucleotide)m = (deoxyribonucleotide)n+m + AMP + beta-nicotinamide D-nucleotide.</text>
        <dbReference type="EC" id="6.5.1.2"/>
    </reaction>
</comment>
<comment type="cofactor">
    <cofactor evidence="1">
        <name>Mg(2+)</name>
        <dbReference type="ChEBI" id="CHEBI:18420"/>
    </cofactor>
    <cofactor evidence="1">
        <name>Mn(2+)</name>
        <dbReference type="ChEBI" id="CHEBI:29035"/>
    </cofactor>
</comment>
<comment type="similarity">
    <text evidence="1">Belongs to the NAD-dependent DNA ligase family. LigA subfamily.</text>
</comment>
<accession>Q0TN59</accession>
<dbReference type="EC" id="6.5.1.2" evidence="1"/>
<dbReference type="EMBL" id="CP000246">
    <property type="protein sequence ID" value="ABG84687.1"/>
    <property type="molecule type" value="Genomic_DNA"/>
</dbReference>
<dbReference type="RefSeq" id="WP_011591090.1">
    <property type="nucleotide sequence ID" value="NC_008261.1"/>
</dbReference>
<dbReference type="SMR" id="Q0TN59"/>
<dbReference type="STRING" id="195103.CPF_2541"/>
<dbReference type="PaxDb" id="195103-CPF_2541"/>
<dbReference type="KEGG" id="cpf:CPF_2541"/>
<dbReference type="eggNOG" id="COG0272">
    <property type="taxonomic scope" value="Bacteria"/>
</dbReference>
<dbReference type="HOGENOM" id="CLU_007764_2_1_9"/>
<dbReference type="Proteomes" id="UP000001823">
    <property type="component" value="Chromosome"/>
</dbReference>
<dbReference type="GO" id="GO:0005829">
    <property type="term" value="C:cytosol"/>
    <property type="evidence" value="ECO:0007669"/>
    <property type="project" value="TreeGrafter"/>
</dbReference>
<dbReference type="GO" id="GO:0003677">
    <property type="term" value="F:DNA binding"/>
    <property type="evidence" value="ECO:0007669"/>
    <property type="project" value="InterPro"/>
</dbReference>
<dbReference type="GO" id="GO:0003911">
    <property type="term" value="F:DNA ligase (NAD+) activity"/>
    <property type="evidence" value="ECO:0007669"/>
    <property type="project" value="UniProtKB-UniRule"/>
</dbReference>
<dbReference type="GO" id="GO:0046872">
    <property type="term" value="F:metal ion binding"/>
    <property type="evidence" value="ECO:0007669"/>
    <property type="project" value="UniProtKB-KW"/>
</dbReference>
<dbReference type="GO" id="GO:0006281">
    <property type="term" value="P:DNA repair"/>
    <property type="evidence" value="ECO:0007669"/>
    <property type="project" value="UniProtKB-KW"/>
</dbReference>
<dbReference type="GO" id="GO:0006260">
    <property type="term" value="P:DNA replication"/>
    <property type="evidence" value="ECO:0007669"/>
    <property type="project" value="UniProtKB-KW"/>
</dbReference>
<dbReference type="CDD" id="cd17748">
    <property type="entry name" value="BRCT_DNA_ligase_like"/>
    <property type="match status" value="1"/>
</dbReference>
<dbReference type="CDD" id="cd00114">
    <property type="entry name" value="LIGANc"/>
    <property type="match status" value="1"/>
</dbReference>
<dbReference type="FunFam" id="1.10.150.20:FF:000006">
    <property type="entry name" value="DNA ligase"/>
    <property type="match status" value="1"/>
</dbReference>
<dbReference type="FunFam" id="1.10.150.20:FF:000007">
    <property type="entry name" value="DNA ligase"/>
    <property type="match status" value="1"/>
</dbReference>
<dbReference type="FunFam" id="2.40.50.140:FF:000012">
    <property type="entry name" value="DNA ligase"/>
    <property type="match status" value="1"/>
</dbReference>
<dbReference type="FunFam" id="3.40.50.10190:FF:000054">
    <property type="entry name" value="DNA ligase"/>
    <property type="match status" value="1"/>
</dbReference>
<dbReference type="Gene3D" id="1.10.150.20">
    <property type="entry name" value="5' to 3' exonuclease, C-terminal subdomain"/>
    <property type="match status" value="2"/>
</dbReference>
<dbReference type="Gene3D" id="3.40.50.10190">
    <property type="entry name" value="BRCT domain"/>
    <property type="match status" value="1"/>
</dbReference>
<dbReference type="Gene3D" id="3.30.470.30">
    <property type="entry name" value="DNA ligase/mRNA capping enzyme"/>
    <property type="match status" value="1"/>
</dbReference>
<dbReference type="Gene3D" id="1.10.287.610">
    <property type="entry name" value="Helix hairpin bin"/>
    <property type="match status" value="1"/>
</dbReference>
<dbReference type="Gene3D" id="2.40.50.140">
    <property type="entry name" value="Nucleic acid-binding proteins"/>
    <property type="match status" value="1"/>
</dbReference>
<dbReference type="HAMAP" id="MF_01588">
    <property type="entry name" value="DNA_ligase_A"/>
    <property type="match status" value="1"/>
</dbReference>
<dbReference type="InterPro" id="IPR001357">
    <property type="entry name" value="BRCT_dom"/>
</dbReference>
<dbReference type="InterPro" id="IPR036420">
    <property type="entry name" value="BRCT_dom_sf"/>
</dbReference>
<dbReference type="InterPro" id="IPR041663">
    <property type="entry name" value="DisA/LigA_HHH"/>
</dbReference>
<dbReference type="InterPro" id="IPR001679">
    <property type="entry name" value="DNA_ligase"/>
</dbReference>
<dbReference type="InterPro" id="IPR033136">
    <property type="entry name" value="DNA_ligase_CS"/>
</dbReference>
<dbReference type="InterPro" id="IPR013839">
    <property type="entry name" value="DNAligase_adenylation"/>
</dbReference>
<dbReference type="InterPro" id="IPR013840">
    <property type="entry name" value="DNAligase_N"/>
</dbReference>
<dbReference type="InterPro" id="IPR003583">
    <property type="entry name" value="Hlx-hairpin-Hlx_DNA-bd_motif"/>
</dbReference>
<dbReference type="InterPro" id="IPR012340">
    <property type="entry name" value="NA-bd_OB-fold"/>
</dbReference>
<dbReference type="InterPro" id="IPR004150">
    <property type="entry name" value="NAD_DNA_ligase_OB"/>
</dbReference>
<dbReference type="InterPro" id="IPR010994">
    <property type="entry name" value="RuvA_2-like"/>
</dbReference>
<dbReference type="NCBIfam" id="TIGR00575">
    <property type="entry name" value="dnlj"/>
    <property type="match status" value="1"/>
</dbReference>
<dbReference type="NCBIfam" id="NF005932">
    <property type="entry name" value="PRK07956.1"/>
    <property type="match status" value="1"/>
</dbReference>
<dbReference type="PANTHER" id="PTHR23389">
    <property type="entry name" value="CHROMOSOME TRANSMISSION FIDELITY FACTOR 18"/>
    <property type="match status" value="1"/>
</dbReference>
<dbReference type="PANTHER" id="PTHR23389:SF9">
    <property type="entry name" value="DNA LIGASE"/>
    <property type="match status" value="1"/>
</dbReference>
<dbReference type="Pfam" id="PF00533">
    <property type="entry name" value="BRCT"/>
    <property type="match status" value="1"/>
</dbReference>
<dbReference type="Pfam" id="PF01653">
    <property type="entry name" value="DNA_ligase_aden"/>
    <property type="match status" value="1"/>
</dbReference>
<dbReference type="Pfam" id="PF03120">
    <property type="entry name" value="DNA_ligase_OB"/>
    <property type="match status" value="1"/>
</dbReference>
<dbReference type="Pfam" id="PF12826">
    <property type="entry name" value="HHH_2"/>
    <property type="match status" value="1"/>
</dbReference>
<dbReference type="Pfam" id="PF14520">
    <property type="entry name" value="HHH_5"/>
    <property type="match status" value="1"/>
</dbReference>
<dbReference type="PIRSF" id="PIRSF001604">
    <property type="entry name" value="LigA"/>
    <property type="match status" value="1"/>
</dbReference>
<dbReference type="SMART" id="SM00292">
    <property type="entry name" value="BRCT"/>
    <property type="match status" value="1"/>
</dbReference>
<dbReference type="SMART" id="SM00278">
    <property type="entry name" value="HhH1"/>
    <property type="match status" value="3"/>
</dbReference>
<dbReference type="SMART" id="SM00532">
    <property type="entry name" value="LIGANc"/>
    <property type="match status" value="1"/>
</dbReference>
<dbReference type="SUPFAM" id="SSF52113">
    <property type="entry name" value="BRCT domain"/>
    <property type="match status" value="1"/>
</dbReference>
<dbReference type="SUPFAM" id="SSF56091">
    <property type="entry name" value="DNA ligase/mRNA capping enzyme, catalytic domain"/>
    <property type="match status" value="1"/>
</dbReference>
<dbReference type="SUPFAM" id="SSF50249">
    <property type="entry name" value="Nucleic acid-binding proteins"/>
    <property type="match status" value="1"/>
</dbReference>
<dbReference type="SUPFAM" id="SSF47781">
    <property type="entry name" value="RuvA domain 2-like"/>
    <property type="match status" value="1"/>
</dbReference>
<dbReference type="PROSITE" id="PS50172">
    <property type="entry name" value="BRCT"/>
    <property type="match status" value="1"/>
</dbReference>
<dbReference type="PROSITE" id="PS01056">
    <property type="entry name" value="DNA_LIGASE_N2"/>
    <property type="match status" value="1"/>
</dbReference>
<name>DNLJ_CLOP1</name>
<keyword id="KW-0227">DNA damage</keyword>
<keyword id="KW-0234">DNA repair</keyword>
<keyword id="KW-0235">DNA replication</keyword>
<keyword id="KW-0436">Ligase</keyword>
<keyword id="KW-0460">Magnesium</keyword>
<keyword id="KW-0464">Manganese</keyword>
<keyword id="KW-0479">Metal-binding</keyword>
<keyword id="KW-0520">NAD</keyword>
<keyword id="KW-0862">Zinc</keyword>
<sequence length="662" mass="74964">MDKKKLIEELVEELNKYAYEYYVLGNSSVTDKDYDKKYYELVDLEKETGYKLPYSPTQRVGDVILPEFKKYTHKARLWSLDKAQTLEEIREWHNRNVKFLEEYNRTSDEELPPLKYILTKKFDGLTINLSYDENGVLVTGATRGTGAIGEDVTAQVKTIKSIPLKIDCHDFLEIHGEAIMTTEAFEKYNSEADTPLKNLRNGAAGALRNLNVAETAKRNLSAFFYDVGYKEGAPFKTYMEMLNFIKTKGFPMDDYIRECTTLDEIQKEIDYIRDIRFDLNYDIDGLVIAIDDIRTRELLGYTVKFPKWAIAYKFEAQEATTKLLDVEWNVGRSGRVSPTAILEPVELAGVTVKRATLNNMDDIARKGVRLGAEVFVRRSNDVIPEIMGVVPESLEGTKEIEEPKVCPACGAHLVHEGVHIYCENTLGCKPQMVKTIVHFAGREAMNIAGFSEKTAEQLFEKLDIRDISDLYKLEYEKLLDLDKFGPKKAQNLLDAIEKSKDCTLEAFLYSLGIPNVGVKTAKDLVKRFESLENLEKATFEELVSVQDVGDIVARSIIEFFKEERTLKVINELLSLGVNPHYEKKEVLESPFMGKTVVVTGTLENYSRTSIKEKLESLGAKVSGSVSKKTDFVIAGEAAGSKYDKAKSLGVTILSEEEFENMI</sequence>
<gene>
    <name evidence="1" type="primary">ligA</name>
    <name type="ordered locus">CPF_2541</name>
</gene>
<protein>
    <recommendedName>
        <fullName evidence="1">DNA ligase</fullName>
        <ecNumber evidence="1">6.5.1.2</ecNumber>
    </recommendedName>
    <alternativeName>
        <fullName evidence="1">Polydeoxyribonucleotide synthase [NAD(+)]</fullName>
    </alternativeName>
</protein>